<organism>
    <name type="scientific">Prochlorococcus marinus (strain MIT 9211)</name>
    <dbReference type="NCBI Taxonomy" id="93059"/>
    <lineage>
        <taxon>Bacteria</taxon>
        <taxon>Bacillati</taxon>
        <taxon>Cyanobacteriota</taxon>
        <taxon>Cyanophyceae</taxon>
        <taxon>Synechococcales</taxon>
        <taxon>Prochlorococcaceae</taxon>
        <taxon>Prochlorococcus</taxon>
    </lineage>
</organism>
<comment type="function">
    <text evidence="1">This b-type cytochrome is tightly associated with the reaction center of photosystem II (PSII). PSII is a light-driven water:plastoquinone oxidoreductase that uses light energy to abstract electrons from H(2)O, generating O(2) and a proton gradient subsequently used for ATP formation. It consists of a core antenna complex that captures photons, and an electron transfer chain that converts photonic excitation into a charge separation.</text>
</comment>
<comment type="cofactor">
    <cofactor evidence="1">
        <name>heme b</name>
        <dbReference type="ChEBI" id="CHEBI:60344"/>
    </cofactor>
    <text evidence="1">With its partner (PsbF) binds heme. PSII binds additional chlorophylls, carotenoids and specific lipids.</text>
</comment>
<comment type="subunit">
    <text evidence="2">Heterodimer of an alpha subunit and a beta subunit. PSII is composed of 1 copy each of membrane proteins PsbA, PsbB, PsbC, PsbD, PsbE, PsbF, PsbH, PsbI, PsbJ, PsbK, PsbL, PsbM, PsbT, PsbX, PsbY, Psb30/Ycf12, peripheral proteins PsbO, CyanoQ (PsbQ), PsbU, PsbV and a large number of cofactors. It forms dimeric complexes.</text>
</comment>
<comment type="subcellular location">
    <subcellularLocation>
        <location evidence="1">Cellular thylakoid membrane</location>
        <topology evidence="1">Single-pass membrane protein</topology>
    </subcellularLocation>
</comment>
<comment type="similarity">
    <text evidence="1">Belongs to the PsbE/PsbF family.</text>
</comment>
<protein>
    <recommendedName>
        <fullName evidence="1">Cytochrome b559 subunit alpha</fullName>
    </recommendedName>
    <alternativeName>
        <fullName evidence="1">PSII reaction center subunit V</fullName>
    </alternativeName>
</protein>
<reference key="1">
    <citation type="journal article" date="2007" name="PLoS Genet.">
        <title>Patterns and implications of gene gain and loss in the evolution of Prochlorococcus.</title>
        <authorList>
            <person name="Kettler G.C."/>
            <person name="Martiny A.C."/>
            <person name="Huang K."/>
            <person name="Zucker J."/>
            <person name="Coleman M.L."/>
            <person name="Rodrigue S."/>
            <person name="Chen F."/>
            <person name="Lapidus A."/>
            <person name="Ferriera S."/>
            <person name="Johnson J."/>
            <person name="Steglich C."/>
            <person name="Church G.M."/>
            <person name="Richardson P."/>
            <person name="Chisholm S.W."/>
        </authorList>
    </citation>
    <scope>NUCLEOTIDE SEQUENCE [LARGE SCALE GENOMIC DNA]</scope>
    <source>
        <strain>MIT 9211</strain>
    </source>
</reference>
<sequence>MAAGSTGERPFFEIITSVRYWIIHAVTLPAIFIAGFLFVSTGLAYDAFGTPRPDTYFQASESKAPVVSQRFESKAQLDLRLK</sequence>
<accession>A9BDU4</accession>
<evidence type="ECO:0000255" key="1">
    <source>
        <dbReference type="HAMAP-Rule" id="MF_00642"/>
    </source>
</evidence>
<evidence type="ECO:0000305" key="2"/>
<gene>
    <name evidence="1" type="primary">psbE</name>
    <name type="ordered locus">P9211_03231</name>
</gene>
<name>PSBE_PROM4</name>
<dbReference type="EMBL" id="CP000878">
    <property type="protein sequence ID" value="ABX08254.1"/>
    <property type="molecule type" value="Genomic_DNA"/>
</dbReference>
<dbReference type="RefSeq" id="WP_012194879.1">
    <property type="nucleotide sequence ID" value="NC_009976.1"/>
</dbReference>
<dbReference type="SMR" id="A9BDU4"/>
<dbReference type="STRING" id="93059.P9211_03231"/>
<dbReference type="KEGG" id="pmj:P9211_03231"/>
<dbReference type="eggNOG" id="ENOG5032RR6">
    <property type="taxonomic scope" value="Bacteria"/>
</dbReference>
<dbReference type="HOGENOM" id="CLU_194095_0_0_3"/>
<dbReference type="OrthoDB" id="514620at2"/>
<dbReference type="Proteomes" id="UP000000788">
    <property type="component" value="Chromosome"/>
</dbReference>
<dbReference type="GO" id="GO:0009523">
    <property type="term" value="C:photosystem II"/>
    <property type="evidence" value="ECO:0007669"/>
    <property type="project" value="UniProtKB-KW"/>
</dbReference>
<dbReference type="GO" id="GO:0031676">
    <property type="term" value="C:plasma membrane-derived thylakoid membrane"/>
    <property type="evidence" value="ECO:0007669"/>
    <property type="project" value="UniProtKB-SubCell"/>
</dbReference>
<dbReference type="GO" id="GO:0009055">
    <property type="term" value="F:electron transfer activity"/>
    <property type="evidence" value="ECO:0007669"/>
    <property type="project" value="UniProtKB-UniRule"/>
</dbReference>
<dbReference type="GO" id="GO:0020037">
    <property type="term" value="F:heme binding"/>
    <property type="evidence" value="ECO:0007669"/>
    <property type="project" value="InterPro"/>
</dbReference>
<dbReference type="GO" id="GO:0005506">
    <property type="term" value="F:iron ion binding"/>
    <property type="evidence" value="ECO:0007669"/>
    <property type="project" value="UniProtKB-UniRule"/>
</dbReference>
<dbReference type="GO" id="GO:0009767">
    <property type="term" value="P:photosynthetic electron transport chain"/>
    <property type="evidence" value="ECO:0007669"/>
    <property type="project" value="InterPro"/>
</dbReference>
<dbReference type="Gene3D" id="1.20.5.860">
    <property type="entry name" value="Photosystem II cytochrome b559, alpha subunit"/>
    <property type="match status" value="1"/>
</dbReference>
<dbReference type="HAMAP" id="MF_00642">
    <property type="entry name" value="PSII_PsbE"/>
    <property type="match status" value="1"/>
</dbReference>
<dbReference type="InterPro" id="IPR006217">
    <property type="entry name" value="PSII_cyt_b559_asu"/>
</dbReference>
<dbReference type="InterPro" id="IPR037025">
    <property type="entry name" value="PSII_cyt_b559_asu_sf"/>
</dbReference>
<dbReference type="InterPro" id="IPR013081">
    <property type="entry name" value="PSII_cyt_b559_N"/>
</dbReference>
<dbReference type="InterPro" id="IPR013082">
    <property type="entry name" value="PSII_cytb559_asu_lum"/>
</dbReference>
<dbReference type="NCBIfam" id="TIGR01332">
    <property type="entry name" value="cyt_b559_alpha"/>
    <property type="match status" value="1"/>
</dbReference>
<dbReference type="PANTHER" id="PTHR33391">
    <property type="entry name" value="CYTOCHROME B559 SUBUNIT BETA-RELATED"/>
    <property type="match status" value="1"/>
</dbReference>
<dbReference type="PANTHER" id="PTHR33391:SF9">
    <property type="entry name" value="CYTOCHROME B559 SUBUNIT BETA-RELATED"/>
    <property type="match status" value="1"/>
</dbReference>
<dbReference type="Pfam" id="PF00283">
    <property type="entry name" value="Cytochrom_B559"/>
    <property type="match status" value="1"/>
</dbReference>
<dbReference type="Pfam" id="PF00284">
    <property type="entry name" value="Cytochrom_B559a"/>
    <property type="match status" value="1"/>
</dbReference>
<dbReference type="PIRSF" id="PIRSF000036">
    <property type="entry name" value="PsbE"/>
    <property type="match status" value="1"/>
</dbReference>
<dbReference type="SUPFAM" id="SSF161045">
    <property type="entry name" value="Cytochrome b559 subunits"/>
    <property type="match status" value="1"/>
</dbReference>
<keyword id="KW-0249">Electron transport</keyword>
<keyword id="KW-0349">Heme</keyword>
<keyword id="KW-0408">Iron</keyword>
<keyword id="KW-0472">Membrane</keyword>
<keyword id="KW-0479">Metal-binding</keyword>
<keyword id="KW-0602">Photosynthesis</keyword>
<keyword id="KW-0604">Photosystem II</keyword>
<keyword id="KW-1185">Reference proteome</keyword>
<keyword id="KW-0793">Thylakoid</keyword>
<keyword id="KW-0812">Transmembrane</keyword>
<keyword id="KW-1133">Transmembrane helix</keyword>
<keyword id="KW-0813">Transport</keyword>
<feature type="chain" id="PRO_1000130902" description="Cytochrome b559 subunit alpha">
    <location>
        <begin position="1"/>
        <end position="82"/>
    </location>
</feature>
<feature type="transmembrane region" description="Helical" evidence="1">
    <location>
        <begin position="22"/>
        <end position="36"/>
    </location>
</feature>
<feature type="binding site" description="axial binding residue" evidence="1">
    <location>
        <position position="24"/>
    </location>
    <ligand>
        <name>heme</name>
        <dbReference type="ChEBI" id="CHEBI:30413"/>
        <note>ligand shared with beta subunit</note>
    </ligand>
    <ligandPart>
        <name>Fe</name>
        <dbReference type="ChEBI" id="CHEBI:18248"/>
    </ligandPart>
</feature>
<proteinExistence type="inferred from homology"/>